<organism>
    <name type="scientific">Saccharomyces cerevisiae (strain ATCC 204508 / S288c)</name>
    <name type="common">Baker's yeast</name>
    <dbReference type="NCBI Taxonomy" id="559292"/>
    <lineage>
        <taxon>Eukaryota</taxon>
        <taxon>Fungi</taxon>
        <taxon>Dikarya</taxon>
        <taxon>Ascomycota</taxon>
        <taxon>Saccharomycotina</taxon>
        <taxon>Saccharomycetes</taxon>
        <taxon>Saccharomycetales</taxon>
        <taxon>Saccharomycetaceae</taxon>
        <taxon>Saccharomyces</taxon>
    </lineage>
</organism>
<dbReference type="EMBL" id="AF043582">
    <property type="protein sequence ID" value="AAC14023.1"/>
    <property type="molecule type" value="Genomic_DNA"/>
</dbReference>
<dbReference type="EMBL" id="Z37997">
    <property type="protein sequence ID" value="CAA86094.1"/>
    <property type="status" value="ALT_INIT"/>
    <property type="molecule type" value="Genomic_DNA"/>
</dbReference>
<dbReference type="EMBL" id="BK006942">
    <property type="protein sequence ID" value="DAA08474.1"/>
    <property type="molecule type" value="Genomic_DNA"/>
</dbReference>
<dbReference type="PIR" id="S48368">
    <property type="entry name" value="S48368"/>
</dbReference>
<dbReference type="RefSeq" id="NP_012189.2">
    <property type="nucleotide sequence ID" value="NM_001179426.1"/>
</dbReference>
<dbReference type="PDB" id="3MV2">
    <property type="method" value="X-ray"/>
    <property type="resolution" value="2.90 A"/>
    <property type="chains" value="B/D/F=1-296"/>
</dbReference>
<dbReference type="PDB" id="3MV3">
    <property type="method" value="X-ray"/>
    <property type="resolution" value="3.25 A"/>
    <property type="chains" value="B/D/F=1-296"/>
</dbReference>
<dbReference type="PDB" id="6U3W">
    <property type="method" value="X-ray"/>
    <property type="resolution" value="2.39 A"/>
    <property type="chains" value="B=1-296"/>
</dbReference>
<dbReference type="PDBsum" id="3MV2"/>
<dbReference type="PDBsum" id="3MV3"/>
<dbReference type="PDBsum" id="6U3W"/>
<dbReference type="SMR" id="P40509"/>
<dbReference type="BioGRID" id="34916">
    <property type="interactions" value="591"/>
</dbReference>
<dbReference type="ComplexPortal" id="CPX-1652">
    <property type="entry name" value="COPI vesicle coat complex"/>
</dbReference>
<dbReference type="DIP" id="DIP-4711N"/>
<dbReference type="FunCoup" id="P40509">
    <property type="interactions" value="295"/>
</dbReference>
<dbReference type="IntAct" id="P40509">
    <property type="interactions" value="26"/>
</dbReference>
<dbReference type="MINT" id="P40509"/>
<dbReference type="STRING" id="4932.YIL076W"/>
<dbReference type="TCDB" id="3.A.31.1.1">
    <property type="family name" value="the endosomal sorting complexes required for transport iii (escrt-iii) family"/>
</dbReference>
<dbReference type="iPTMnet" id="P40509"/>
<dbReference type="PaxDb" id="4932-YIL076W"/>
<dbReference type="PeptideAtlas" id="P40509"/>
<dbReference type="EnsemblFungi" id="YIL076W_mRNA">
    <property type="protein sequence ID" value="YIL076W"/>
    <property type="gene ID" value="YIL076W"/>
</dbReference>
<dbReference type="GeneID" id="854734"/>
<dbReference type="KEGG" id="sce:YIL076W"/>
<dbReference type="AGR" id="SGD:S000001338"/>
<dbReference type="SGD" id="S000001338">
    <property type="gene designation" value="SEC28"/>
</dbReference>
<dbReference type="VEuPathDB" id="FungiDB:YIL076W"/>
<dbReference type="eggNOG" id="KOG3081">
    <property type="taxonomic scope" value="Eukaryota"/>
</dbReference>
<dbReference type="GeneTree" id="ENSGT00390000003478"/>
<dbReference type="HOGENOM" id="CLU_075638_0_0_1"/>
<dbReference type="InParanoid" id="P40509"/>
<dbReference type="OMA" id="SNFYYFE"/>
<dbReference type="OrthoDB" id="310217at2759"/>
<dbReference type="BioCyc" id="YEAST:G3O-31341-MONOMER"/>
<dbReference type="Reactome" id="R-SCE-6807878">
    <property type="pathway name" value="COPI-mediated anterograde transport"/>
</dbReference>
<dbReference type="Reactome" id="R-SCE-6811434">
    <property type="pathway name" value="COPI-dependent Golgi-to-ER retrograde traffic"/>
</dbReference>
<dbReference type="BioGRID-ORCS" id="854734">
    <property type="hits" value="0 hits in 10 CRISPR screens"/>
</dbReference>
<dbReference type="EvolutionaryTrace" id="P40509"/>
<dbReference type="PRO" id="PR:P40509"/>
<dbReference type="Proteomes" id="UP000002311">
    <property type="component" value="Chromosome IX"/>
</dbReference>
<dbReference type="RNAct" id="P40509">
    <property type="molecule type" value="protein"/>
</dbReference>
<dbReference type="GO" id="GO:0030126">
    <property type="term" value="C:COPI vesicle coat"/>
    <property type="evidence" value="ECO:0000314"/>
    <property type="project" value="SGD"/>
</dbReference>
<dbReference type="GO" id="GO:0000139">
    <property type="term" value="C:Golgi membrane"/>
    <property type="evidence" value="ECO:0007669"/>
    <property type="project" value="UniProtKB-SubCell"/>
</dbReference>
<dbReference type="GO" id="GO:1990841">
    <property type="term" value="F:promoter-specific chromatin binding"/>
    <property type="evidence" value="ECO:0000314"/>
    <property type="project" value="SGD"/>
</dbReference>
<dbReference type="GO" id="GO:0005198">
    <property type="term" value="F:structural molecule activity"/>
    <property type="evidence" value="ECO:0007669"/>
    <property type="project" value="InterPro"/>
</dbReference>
<dbReference type="GO" id="GO:0006888">
    <property type="term" value="P:endoplasmic reticulum to Golgi vesicle-mediated transport"/>
    <property type="evidence" value="ECO:0000315"/>
    <property type="project" value="SGD"/>
</dbReference>
<dbReference type="GO" id="GO:0006891">
    <property type="term" value="P:intra-Golgi vesicle-mediated transport"/>
    <property type="evidence" value="ECO:0000318"/>
    <property type="project" value="GO_Central"/>
</dbReference>
<dbReference type="GO" id="GO:0032511">
    <property type="term" value="P:late endosome to vacuole transport via multivesicular body sorting pathway"/>
    <property type="evidence" value="ECO:0000315"/>
    <property type="project" value="SGD"/>
</dbReference>
<dbReference type="GO" id="GO:0015031">
    <property type="term" value="P:protein transport"/>
    <property type="evidence" value="ECO:0007669"/>
    <property type="project" value="UniProtKB-KW"/>
</dbReference>
<dbReference type="GO" id="GO:0006890">
    <property type="term" value="P:retrograde vesicle-mediated transport, Golgi to endoplasmic reticulum"/>
    <property type="evidence" value="ECO:0000303"/>
    <property type="project" value="ComplexPortal"/>
</dbReference>
<dbReference type="GO" id="GO:0006901">
    <property type="term" value="P:vesicle coating"/>
    <property type="evidence" value="ECO:0000315"/>
    <property type="project" value="SGD"/>
</dbReference>
<dbReference type="Gene3D" id="1.25.40.10">
    <property type="entry name" value="Tetratricopeptide repeat domain"/>
    <property type="match status" value="1"/>
</dbReference>
<dbReference type="InterPro" id="IPR006822">
    <property type="entry name" value="Coatomer_esu"/>
</dbReference>
<dbReference type="InterPro" id="IPR011990">
    <property type="entry name" value="TPR-like_helical_dom_sf"/>
</dbReference>
<dbReference type="PANTHER" id="PTHR10805">
    <property type="entry name" value="COATOMER SUBUNIT EPSILON"/>
    <property type="match status" value="1"/>
</dbReference>
<dbReference type="PANTHER" id="PTHR10805:SF0">
    <property type="entry name" value="COATOMER SUBUNIT EPSILON"/>
    <property type="match status" value="1"/>
</dbReference>
<dbReference type="Pfam" id="PF04733">
    <property type="entry name" value="Coatomer_E"/>
    <property type="match status" value="1"/>
</dbReference>
<dbReference type="PIRSF" id="PIRSF016478">
    <property type="entry name" value="Coatomer_esu"/>
    <property type="match status" value="1"/>
</dbReference>
<keyword id="KW-0002">3D-structure</keyword>
<keyword id="KW-0963">Cytoplasm</keyword>
<keyword id="KW-0968">Cytoplasmic vesicle</keyword>
<keyword id="KW-0931">ER-Golgi transport</keyword>
<keyword id="KW-0333">Golgi apparatus</keyword>
<keyword id="KW-0472">Membrane</keyword>
<keyword id="KW-0653">Protein transport</keyword>
<keyword id="KW-1185">Reference proteome</keyword>
<keyword id="KW-0813">Transport</keyword>
<comment type="function">
    <text evidence="3 4">The coatomer is a cytosolic protein complex that binds to dilysine motifs and reversibly associates with Golgi non-clathrin-coated vesicles, which further mediate biosynthetic protein transport from the ER, via the Golgi up to the trans Golgi network. The coatomer complex is required for budding from Golgi membranes, and is essential for the retrograde Golgi-to-ER transport of dilysine-tagged proteins.</text>
</comment>
<comment type="subunit">
    <text evidence="3">Oligomeric complex that consists of at least the alpha, beta, beta', gamma, delta, epsilon and zeta subunits. Interacts with the ESCRT-0 subunit VPS27.</text>
</comment>
<comment type="interaction">
    <interactant intactId="EBI-4884">
        <id>P40509</id>
    </interactant>
    <interactant intactId="EBI-4860">
        <id>P53622</id>
        <label>COP1</label>
    </interactant>
    <organismsDiffer>false</organismsDiffer>
    <experiments>12</experiments>
</comment>
<comment type="interaction">
    <interactant intactId="EBI-4884">
        <id>P40509</id>
    </interactant>
    <interactant intactId="EBI-4898">
        <id>P41811</id>
        <label>SEC27</label>
    </interactant>
    <organismsDiffer>false</organismsDiffer>
    <experiments>5</experiments>
</comment>
<comment type="interaction">
    <interactant intactId="EBI-4884">
        <id>P40509</id>
    </interactant>
    <interactant intactId="EBI-20380">
        <id>P40343</id>
        <label>VPS27</label>
    </interactant>
    <organismsDiffer>false</organismsDiffer>
    <experiments>2</experiments>
</comment>
<comment type="subcellular location">
    <subcellularLocation>
        <location evidence="1">Cytoplasm</location>
    </subcellularLocation>
    <subcellularLocation>
        <location evidence="1">Golgi apparatus membrane</location>
        <topology evidence="1">Peripheral membrane protein</topology>
        <orientation evidence="1">Cytoplasmic side</orientation>
    </subcellularLocation>
    <subcellularLocation>
        <location evidence="1">Cytoplasmic vesicle</location>
        <location evidence="1">COPI-coated vesicle membrane</location>
        <topology evidence="1">Peripheral membrane protein</topology>
        <orientation evidence="1">Cytoplasmic side</orientation>
    </subcellularLocation>
    <text evidence="1">The coatomer is cytoplasmic or polymerized on the cytoplasmic side of the Golgi, as well as on the vesicles/buds originating from it.</text>
</comment>
<comment type="miscellaneous">
    <text evidence="2">Present with 23100 molecules/cell in log phase SD medium.</text>
</comment>
<comment type="similarity">
    <text evidence="5">Belongs to the COPE family.</text>
</comment>
<comment type="sequence caution" evidence="5">
    <conflict type="erroneous initiation">
        <sequence resource="EMBL-CDS" id="CAA86094"/>
    </conflict>
</comment>
<accession>P40509</accession>
<accession>D6VVK8</accession>
<feature type="chain" id="PRO_0000193856" description="Coatomer subunit epsilon">
    <location>
        <begin position="1"/>
        <end position="296"/>
    </location>
</feature>
<feature type="helix" evidence="7">
    <location>
        <begin position="4"/>
        <end position="11"/>
    </location>
</feature>
<feature type="helix" evidence="7">
    <location>
        <begin position="15"/>
        <end position="23"/>
    </location>
</feature>
<feature type="turn" evidence="7">
    <location>
        <begin position="24"/>
        <end position="27"/>
    </location>
</feature>
<feature type="helix" evidence="7">
    <location>
        <begin position="31"/>
        <end position="43"/>
    </location>
</feature>
<feature type="strand" evidence="7">
    <location>
        <begin position="52"/>
        <end position="54"/>
    </location>
</feature>
<feature type="helix" evidence="7">
    <location>
        <begin position="55"/>
        <end position="69"/>
    </location>
</feature>
<feature type="helix" evidence="7">
    <location>
        <begin position="73"/>
        <end position="79"/>
    </location>
</feature>
<feature type="helix" evidence="7">
    <location>
        <begin position="86"/>
        <end position="98"/>
    </location>
</feature>
<feature type="helix" evidence="7">
    <location>
        <begin position="102"/>
        <end position="111"/>
    </location>
</feature>
<feature type="turn" evidence="6">
    <location>
        <begin position="114"/>
        <end position="117"/>
    </location>
</feature>
<feature type="strand" evidence="6">
    <location>
        <begin position="118"/>
        <end position="120"/>
    </location>
</feature>
<feature type="helix" evidence="7">
    <location>
        <begin position="121"/>
        <end position="134"/>
    </location>
</feature>
<feature type="helix" evidence="7">
    <location>
        <begin position="138"/>
        <end position="150"/>
    </location>
</feature>
<feature type="turn" evidence="6">
    <location>
        <begin position="153"/>
        <end position="155"/>
    </location>
</feature>
<feature type="helix" evidence="7">
    <location>
        <begin position="160"/>
        <end position="174"/>
    </location>
</feature>
<feature type="turn" evidence="7">
    <location>
        <begin position="179"/>
        <end position="181"/>
    </location>
</feature>
<feature type="helix" evidence="7">
    <location>
        <begin position="182"/>
        <end position="193"/>
    </location>
</feature>
<feature type="helix" evidence="7">
    <location>
        <begin position="197"/>
        <end position="209"/>
    </location>
</feature>
<feature type="helix" evidence="7">
    <location>
        <begin position="213"/>
        <end position="224"/>
    </location>
</feature>
<feature type="helix" evidence="7">
    <location>
        <begin position="226"/>
        <end position="229"/>
    </location>
</feature>
<feature type="turn" evidence="7">
    <location>
        <begin position="230"/>
        <end position="232"/>
    </location>
</feature>
<feature type="helix" evidence="7">
    <location>
        <begin position="233"/>
        <end position="254"/>
    </location>
</feature>
<feature type="helix" evidence="7">
    <location>
        <begin position="259"/>
        <end position="268"/>
    </location>
</feature>
<feature type="helix" evidence="7">
    <location>
        <begin position="273"/>
        <end position="291"/>
    </location>
</feature>
<reference key="1">
    <citation type="journal article" date="1998" name="EMBO J.">
        <title>Epsilon-COP is a structural component of coatomer that functions to stabilize alpha-COP.</title>
        <authorList>
            <person name="Duden R."/>
            <person name="Kajikawa L."/>
            <person name="Wuestehube L."/>
            <person name="Schekman R."/>
        </authorList>
    </citation>
    <scope>NUCLEOTIDE SEQUENCE [GENOMIC DNA]</scope>
    <scope>IDENTIFICATION OF INITIATION SITE</scope>
    <scope>FUNCTION</scope>
</reference>
<reference key="2">
    <citation type="journal article" date="1997" name="Nature">
        <title>The nucleotide sequence of Saccharomyces cerevisiae chromosome IX.</title>
        <authorList>
            <person name="Churcher C.M."/>
            <person name="Bowman S."/>
            <person name="Badcock K."/>
            <person name="Bankier A.T."/>
            <person name="Brown D."/>
            <person name="Chillingworth T."/>
            <person name="Connor R."/>
            <person name="Devlin K."/>
            <person name="Gentles S."/>
            <person name="Hamlin N."/>
            <person name="Harris D.E."/>
            <person name="Horsnell T."/>
            <person name="Hunt S."/>
            <person name="Jagels K."/>
            <person name="Jones M."/>
            <person name="Lye G."/>
            <person name="Moule S."/>
            <person name="Odell C."/>
            <person name="Pearson D."/>
            <person name="Rajandream M.A."/>
            <person name="Rice P."/>
            <person name="Rowley N."/>
            <person name="Skelton J."/>
            <person name="Smith V."/>
            <person name="Walsh S.V."/>
            <person name="Whitehead S."/>
            <person name="Barrell B.G."/>
        </authorList>
    </citation>
    <scope>NUCLEOTIDE SEQUENCE [LARGE SCALE GENOMIC DNA]</scope>
    <source>
        <strain>ATCC 204508 / S288c</strain>
    </source>
</reference>
<reference key="3">
    <citation type="journal article" date="2014" name="G3 (Bethesda)">
        <title>The reference genome sequence of Saccharomyces cerevisiae: Then and now.</title>
        <authorList>
            <person name="Engel S.R."/>
            <person name="Dietrich F.S."/>
            <person name="Fisk D.G."/>
            <person name="Binkley G."/>
            <person name="Balakrishnan R."/>
            <person name="Costanzo M.C."/>
            <person name="Dwight S.S."/>
            <person name="Hitz B.C."/>
            <person name="Karra K."/>
            <person name="Nash R.S."/>
            <person name="Weng S."/>
            <person name="Wong E.D."/>
            <person name="Lloyd P."/>
            <person name="Skrzypek M.S."/>
            <person name="Miyasato S.R."/>
            <person name="Simison M."/>
            <person name="Cherry J.M."/>
        </authorList>
    </citation>
    <scope>GENOME REANNOTATION</scope>
    <source>
        <strain>ATCC 204508 / S288c</strain>
    </source>
</reference>
<reference key="4">
    <citation type="journal article" date="2003" name="Nature">
        <title>Global analysis of protein localization in budding yeast.</title>
        <authorList>
            <person name="Huh W.-K."/>
            <person name="Falvo J.V."/>
            <person name="Gerke L.C."/>
            <person name="Carroll A.S."/>
            <person name="Howson R.W."/>
            <person name="Weissman J.S."/>
            <person name="O'Shea E.K."/>
        </authorList>
    </citation>
    <scope>SUBCELLULAR LOCATION [LARGE SCALE ANALYSIS]</scope>
</reference>
<reference key="5">
    <citation type="journal article" date="2003" name="Nature">
        <title>Global analysis of protein expression in yeast.</title>
        <authorList>
            <person name="Ghaemmaghami S."/>
            <person name="Huh W.-K."/>
            <person name="Bower K."/>
            <person name="Howson R.W."/>
            <person name="Belle A."/>
            <person name="Dephoure N."/>
            <person name="O'Shea E.K."/>
            <person name="Weissman J.S."/>
        </authorList>
    </citation>
    <scope>LEVEL OF PROTEIN EXPRESSION [LARGE SCALE ANALYSIS]</scope>
</reference>
<reference key="6">
    <citation type="journal article" date="2005" name="Nucleic Acids Res.">
        <title>Mapping of transcription start sites in Saccharomyces cerevisiae using 5' SAGE.</title>
        <authorList>
            <person name="Zhang Z."/>
            <person name="Dietrich F.S."/>
        </authorList>
    </citation>
    <scope>IDENTIFICATION OF PROBABLE INITIATION SITE</scope>
</reference>
<reference key="7">
    <citation type="journal article" date="2007" name="Mol. Cell. Biol.">
        <title>Involvement of specific COPI subunits in protein sorting from the late endosome to the vacuole in yeast.</title>
        <authorList>
            <person name="Gabriely G."/>
            <person name="Kama R."/>
            <person name="Gerst J.E."/>
        </authorList>
    </citation>
    <scope>FUNCTION</scope>
    <scope>SUBCELLULAR LOCATION</scope>
    <scope>INTERACTION WITH VPS27</scope>
</reference>
<name>COPE_YEAST</name>
<protein>
    <recommendedName>
        <fullName>Coatomer subunit epsilon</fullName>
    </recommendedName>
    <alternativeName>
        <fullName>Epsilon-coat protein</fullName>
        <shortName>Epsilon-COP</shortName>
    </alternativeName>
</protein>
<gene>
    <name type="primary">SEC28</name>
    <name type="ordered locus">YIL076W</name>
</gene>
<sequence>MDYFNIKQNYYTGNFVQCLQEIEKFSKVTDNTLLFYKAKTLLALGQYQSQDPTSKLGKVLDLYVQFLDTKNIEELENLLKDKQNSPYELYLLATAQAILGDLDKSLETCVEGIDNDEAEGTTELLLLAIEVALLNNNVSTASTIFDNYTNAIEDTVSGDNEMILNLAESYIKFATNKETATSNFYYYEELSQTFPTWKTQLGLLNLHLQQRNIAEAQGIVELLLSDYYSVEQKENAVLYKPTFLANQITLALMQGLDTEDLTNQLVKLDHEHAFIKHHQEIDAKFDELVRKYDTSN</sequence>
<proteinExistence type="evidence at protein level"/>
<evidence type="ECO:0000250" key="1"/>
<evidence type="ECO:0000269" key="2">
    <source>
    </source>
</evidence>
<evidence type="ECO:0000269" key="3">
    <source>
    </source>
</evidence>
<evidence type="ECO:0000269" key="4">
    <source>
    </source>
</evidence>
<evidence type="ECO:0000305" key="5"/>
<evidence type="ECO:0007829" key="6">
    <source>
        <dbReference type="PDB" id="3MV3"/>
    </source>
</evidence>
<evidence type="ECO:0007829" key="7">
    <source>
        <dbReference type="PDB" id="6U3W"/>
    </source>
</evidence>